<sequence>MAIILGIDPGSRVTGYGVIRQVGRQLSYLGSGCIRTKVDDLPSRLKLIYAGVTEIITQFQPDYFAIEQVFMAKNADSALKLGQARGVAIVAAVNQELPVFEYAARQVKQTVVGIGSAEKSQVQHMVRTLLKLPANPQADAADALAIAITHCHVSQNAMQMSESRLNLARGRLR</sequence>
<keyword id="KW-0963">Cytoplasm</keyword>
<keyword id="KW-0227">DNA damage</keyword>
<keyword id="KW-0233">DNA recombination</keyword>
<keyword id="KW-0234">DNA repair</keyword>
<keyword id="KW-0238">DNA-binding</keyword>
<keyword id="KW-0255">Endonuclease</keyword>
<keyword id="KW-0378">Hydrolase</keyword>
<keyword id="KW-0460">Magnesium</keyword>
<keyword id="KW-0479">Metal-binding</keyword>
<keyword id="KW-0540">Nuclease</keyword>
<organism>
    <name type="scientific">Escherichia coli O6:K15:H31 (strain 536 / UPEC)</name>
    <dbReference type="NCBI Taxonomy" id="362663"/>
    <lineage>
        <taxon>Bacteria</taxon>
        <taxon>Pseudomonadati</taxon>
        <taxon>Pseudomonadota</taxon>
        <taxon>Gammaproteobacteria</taxon>
        <taxon>Enterobacterales</taxon>
        <taxon>Enterobacteriaceae</taxon>
        <taxon>Escherichia</taxon>
    </lineage>
</organism>
<evidence type="ECO:0000255" key="1">
    <source>
        <dbReference type="HAMAP-Rule" id="MF_00034"/>
    </source>
</evidence>
<gene>
    <name evidence="1" type="primary">ruvC</name>
    <name type="ordered locus">ECP_1807</name>
</gene>
<name>RUVC_ECOL5</name>
<dbReference type="EC" id="3.1.21.10" evidence="1"/>
<dbReference type="EMBL" id="CP000247">
    <property type="protein sequence ID" value="ABG69810.1"/>
    <property type="molecule type" value="Genomic_DNA"/>
</dbReference>
<dbReference type="RefSeq" id="WP_001295503.1">
    <property type="nucleotide sequence ID" value="NC_008253.1"/>
</dbReference>
<dbReference type="SMR" id="Q0TGW9"/>
<dbReference type="GeneID" id="89516631"/>
<dbReference type="KEGG" id="ecp:ECP_1807"/>
<dbReference type="HOGENOM" id="CLU_091257_2_1_6"/>
<dbReference type="Proteomes" id="UP000009182">
    <property type="component" value="Chromosome"/>
</dbReference>
<dbReference type="GO" id="GO:0005737">
    <property type="term" value="C:cytoplasm"/>
    <property type="evidence" value="ECO:0007669"/>
    <property type="project" value="UniProtKB-SubCell"/>
</dbReference>
<dbReference type="GO" id="GO:0048476">
    <property type="term" value="C:Holliday junction resolvase complex"/>
    <property type="evidence" value="ECO:0007669"/>
    <property type="project" value="UniProtKB-UniRule"/>
</dbReference>
<dbReference type="GO" id="GO:0008821">
    <property type="term" value="F:crossover junction DNA endonuclease activity"/>
    <property type="evidence" value="ECO:0007669"/>
    <property type="project" value="UniProtKB-UniRule"/>
</dbReference>
<dbReference type="GO" id="GO:0003677">
    <property type="term" value="F:DNA binding"/>
    <property type="evidence" value="ECO:0007669"/>
    <property type="project" value="UniProtKB-KW"/>
</dbReference>
<dbReference type="GO" id="GO:0000287">
    <property type="term" value="F:magnesium ion binding"/>
    <property type="evidence" value="ECO:0007669"/>
    <property type="project" value="UniProtKB-UniRule"/>
</dbReference>
<dbReference type="GO" id="GO:0006310">
    <property type="term" value="P:DNA recombination"/>
    <property type="evidence" value="ECO:0007669"/>
    <property type="project" value="UniProtKB-UniRule"/>
</dbReference>
<dbReference type="GO" id="GO:0006281">
    <property type="term" value="P:DNA repair"/>
    <property type="evidence" value="ECO:0007669"/>
    <property type="project" value="UniProtKB-UniRule"/>
</dbReference>
<dbReference type="CDD" id="cd16962">
    <property type="entry name" value="RuvC"/>
    <property type="match status" value="1"/>
</dbReference>
<dbReference type="FunFam" id="3.30.420.10:FF:000002">
    <property type="entry name" value="Crossover junction endodeoxyribonuclease RuvC"/>
    <property type="match status" value="1"/>
</dbReference>
<dbReference type="Gene3D" id="3.30.420.10">
    <property type="entry name" value="Ribonuclease H-like superfamily/Ribonuclease H"/>
    <property type="match status" value="1"/>
</dbReference>
<dbReference type="HAMAP" id="MF_00034">
    <property type="entry name" value="RuvC"/>
    <property type="match status" value="1"/>
</dbReference>
<dbReference type="InterPro" id="IPR012337">
    <property type="entry name" value="RNaseH-like_sf"/>
</dbReference>
<dbReference type="InterPro" id="IPR036397">
    <property type="entry name" value="RNaseH_sf"/>
</dbReference>
<dbReference type="InterPro" id="IPR020563">
    <property type="entry name" value="X-over_junc_endoDNase_Mg_BS"/>
</dbReference>
<dbReference type="InterPro" id="IPR002176">
    <property type="entry name" value="X-over_junc_endoDNase_RuvC"/>
</dbReference>
<dbReference type="NCBIfam" id="NF000711">
    <property type="entry name" value="PRK00039.2-1"/>
    <property type="match status" value="1"/>
</dbReference>
<dbReference type="NCBIfam" id="TIGR00228">
    <property type="entry name" value="ruvC"/>
    <property type="match status" value="1"/>
</dbReference>
<dbReference type="PANTHER" id="PTHR30194">
    <property type="entry name" value="CROSSOVER JUNCTION ENDODEOXYRIBONUCLEASE RUVC"/>
    <property type="match status" value="1"/>
</dbReference>
<dbReference type="PANTHER" id="PTHR30194:SF3">
    <property type="entry name" value="CROSSOVER JUNCTION ENDODEOXYRIBONUCLEASE RUVC"/>
    <property type="match status" value="1"/>
</dbReference>
<dbReference type="Pfam" id="PF02075">
    <property type="entry name" value="RuvC"/>
    <property type="match status" value="1"/>
</dbReference>
<dbReference type="PRINTS" id="PR00696">
    <property type="entry name" value="RSOLVASERUVC"/>
</dbReference>
<dbReference type="SUPFAM" id="SSF53098">
    <property type="entry name" value="Ribonuclease H-like"/>
    <property type="match status" value="1"/>
</dbReference>
<dbReference type="PROSITE" id="PS01321">
    <property type="entry name" value="RUVC"/>
    <property type="match status" value="1"/>
</dbReference>
<accession>Q0TGW9</accession>
<protein>
    <recommendedName>
        <fullName evidence="1">Crossover junction endodeoxyribonuclease RuvC</fullName>
        <ecNumber evidence="1">3.1.21.10</ecNumber>
    </recommendedName>
    <alternativeName>
        <fullName evidence="1">Holliday junction nuclease RuvC</fullName>
    </alternativeName>
    <alternativeName>
        <fullName evidence="1">Holliday junction resolvase RuvC</fullName>
    </alternativeName>
</protein>
<proteinExistence type="inferred from homology"/>
<feature type="chain" id="PRO_1000002750" description="Crossover junction endodeoxyribonuclease RuvC">
    <location>
        <begin position="1"/>
        <end position="173"/>
    </location>
</feature>
<feature type="active site" evidence="1">
    <location>
        <position position="8"/>
    </location>
</feature>
<feature type="active site" evidence="1">
    <location>
        <position position="67"/>
    </location>
</feature>
<feature type="active site" evidence="1">
    <location>
        <position position="139"/>
    </location>
</feature>
<feature type="binding site" evidence="1">
    <location>
        <position position="8"/>
    </location>
    <ligand>
        <name>Mg(2+)</name>
        <dbReference type="ChEBI" id="CHEBI:18420"/>
        <label>1</label>
    </ligand>
</feature>
<feature type="binding site" evidence="1">
    <location>
        <position position="67"/>
    </location>
    <ligand>
        <name>Mg(2+)</name>
        <dbReference type="ChEBI" id="CHEBI:18420"/>
        <label>2</label>
    </ligand>
</feature>
<feature type="binding site" evidence="1">
    <location>
        <position position="139"/>
    </location>
    <ligand>
        <name>Mg(2+)</name>
        <dbReference type="ChEBI" id="CHEBI:18420"/>
        <label>1</label>
    </ligand>
</feature>
<comment type="function">
    <text evidence="1">The RuvA-RuvB-RuvC complex processes Holliday junction (HJ) DNA during genetic recombination and DNA repair. Endonuclease that resolves HJ intermediates. Cleaves cruciform DNA by making single-stranded nicks across the HJ at symmetrical positions within the homologous arms, yielding a 5'-phosphate and a 3'-hydroxyl group; requires a central core of homology in the junction. The consensus cleavage sequence is 5'-(A/T)TT(C/G)-3'. Cleavage occurs on the 3'-side of the TT dinucleotide at the point of strand exchange. HJ branch migration catalyzed by RuvA-RuvB allows RuvC to scan DNA until it finds its consensus sequence, where it cleaves and resolves the cruciform DNA.</text>
</comment>
<comment type="catalytic activity">
    <reaction evidence="1">
        <text>Endonucleolytic cleavage at a junction such as a reciprocal single-stranded crossover between two homologous DNA duplexes (Holliday junction).</text>
        <dbReference type="EC" id="3.1.21.10"/>
    </reaction>
</comment>
<comment type="cofactor">
    <cofactor evidence="1">
        <name>Mg(2+)</name>
        <dbReference type="ChEBI" id="CHEBI:18420"/>
    </cofactor>
    <text evidence="1">Binds 2 Mg(2+) ion per subunit.</text>
</comment>
<comment type="subunit">
    <text evidence="1">Homodimer which binds Holliday junction (HJ) DNA. The HJ becomes 2-fold symmetrical on binding to RuvC with unstacked arms; it has a different conformation from HJ DNA in complex with RuvA. In the full resolvosome a probable DNA-RuvA(4)-RuvB(12)-RuvC(2) complex forms which resolves the HJ.</text>
</comment>
<comment type="subcellular location">
    <subcellularLocation>
        <location evidence="1">Cytoplasm</location>
    </subcellularLocation>
</comment>
<comment type="similarity">
    <text evidence="1">Belongs to the RuvC family.</text>
</comment>
<reference key="1">
    <citation type="journal article" date="2006" name="Mol. Microbiol.">
        <title>Role of pathogenicity island-associated integrases in the genome plasticity of uropathogenic Escherichia coli strain 536.</title>
        <authorList>
            <person name="Hochhut B."/>
            <person name="Wilde C."/>
            <person name="Balling G."/>
            <person name="Middendorf B."/>
            <person name="Dobrindt U."/>
            <person name="Brzuszkiewicz E."/>
            <person name="Gottschalk G."/>
            <person name="Carniel E."/>
            <person name="Hacker J."/>
        </authorList>
    </citation>
    <scope>NUCLEOTIDE SEQUENCE [LARGE SCALE GENOMIC DNA]</scope>
    <source>
        <strain>536 / UPEC</strain>
    </source>
</reference>